<dbReference type="EC" id="3.1.-.-" evidence="1"/>
<dbReference type="EMBL" id="CP001173">
    <property type="protein sequence ID" value="ACI27082.1"/>
    <property type="molecule type" value="Genomic_DNA"/>
</dbReference>
<dbReference type="RefSeq" id="WP_000599171.1">
    <property type="nucleotide sequence ID" value="NC_011333.1"/>
</dbReference>
<dbReference type="SMR" id="B5ZAA2"/>
<dbReference type="KEGG" id="hpg:HPG27_316"/>
<dbReference type="HOGENOM" id="CLU_098240_2_2_7"/>
<dbReference type="Proteomes" id="UP000001735">
    <property type="component" value="Chromosome"/>
</dbReference>
<dbReference type="GO" id="GO:0005829">
    <property type="term" value="C:cytosol"/>
    <property type="evidence" value="ECO:0007669"/>
    <property type="project" value="TreeGrafter"/>
</dbReference>
<dbReference type="GO" id="GO:0004518">
    <property type="term" value="F:nuclease activity"/>
    <property type="evidence" value="ECO:0007669"/>
    <property type="project" value="UniProtKB-KW"/>
</dbReference>
<dbReference type="GO" id="GO:0000967">
    <property type="term" value="P:rRNA 5'-end processing"/>
    <property type="evidence" value="ECO:0007669"/>
    <property type="project" value="UniProtKB-UniRule"/>
</dbReference>
<dbReference type="CDD" id="cd16964">
    <property type="entry name" value="YqgF"/>
    <property type="match status" value="1"/>
</dbReference>
<dbReference type="FunFam" id="3.30.420.140:FF:000013">
    <property type="entry name" value="Putative pre-16S rRNA nuclease"/>
    <property type="match status" value="1"/>
</dbReference>
<dbReference type="Gene3D" id="3.30.420.140">
    <property type="entry name" value="YqgF/RNase H-like domain"/>
    <property type="match status" value="1"/>
</dbReference>
<dbReference type="HAMAP" id="MF_00651">
    <property type="entry name" value="Nuclease_YqgF"/>
    <property type="match status" value="1"/>
</dbReference>
<dbReference type="InterPro" id="IPR012337">
    <property type="entry name" value="RNaseH-like_sf"/>
</dbReference>
<dbReference type="InterPro" id="IPR005227">
    <property type="entry name" value="YqgF"/>
</dbReference>
<dbReference type="InterPro" id="IPR006641">
    <property type="entry name" value="YqgF/RNaseH-like_dom"/>
</dbReference>
<dbReference type="InterPro" id="IPR037027">
    <property type="entry name" value="YqgF/RNaseH-like_dom_sf"/>
</dbReference>
<dbReference type="NCBIfam" id="NF001026">
    <property type="entry name" value="PRK00109.2-2"/>
    <property type="match status" value="1"/>
</dbReference>
<dbReference type="NCBIfam" id="TIGR00250">
    <property type="entry name" value="RNAse_H_YqgF"/>
    <property type="match status" value="1"/>
</dbReference>
<dbReference type="PANTHER" id="PTHR33317">
    <property type="entry name" value="POLYNUCLEOTIDYL TRANSFERASE, RIBONUCLEASE H-LIKE SUPERFAMILY PROTEIN"/>
    <property type="match status" value="1"/>
</dbReference>
<dbReference type="PANTHER" id="PTHR33317:SF4">
    <property type="entry name" value="POLYNUCLEOTIDYL TRANSFERASE, RIBONUCLEASE H-LIKE SUPERFAMILY PROTEIN"/>
    <property type="match status" value="1"/>
</dbReference>
<dbReference type="Pfam" id="PF03652">
    <property type="entry name" value="RuvX"/>
    <property type="match status" value="1"/>
</dbReference>
<dbReference type="SMART" id="SM00732">
    <property type="entry name" value="YqgFc"/>
    <property type="match status" value="1"/>
</dbReference>
<dbReference type="SUPFAM" id="SSF53098">
    <property type="entry name" value="Ribonuclease H-like"/>
    <property type="match status" value="1"/>
</dbReference>
<name>YQGF_HELPG</name>
<evidence type="ECO:0000255" key="1">
    <source>
        <dbReference type="HAMAP-Rule" id="MF_00651"/>
    </source>
</evidence>
<reference key="1">
    <citation type="journal article" date="2009" name="J. Bacteriol.">
        <title>The complete genome sequence of Helicobacter pylori strain G27.</title>
        <authorList>
            <person name="Baltrus D.A."/>
            <person name="Amieva M.R."/>
            <person name="Covacci A."/>
            <person name="Lowe T.M."/>
            <person name="Merrell D.S."/>
            <person name="Ottemann K.M."/>
            <person name="Stein M."/>
            <person name="Salama N.R."/>
            <person name="Guillemin K."/>
        </authorList>
    </citation>
    <scope>NUCLEOTIDE SEQUENCE [LARGE SCALE GENOMIC DNA]</scope>
    <source>
        <strain>G27</strain>
    </source>
</reference>
<accession>B5ZAA2</accession>
<feature type="chain" id="PRO_1000131039" description="Putative pre-16S rRNA nuclease">
    <location>
        <begin position="1"/>
        <end position="134"/>
    </location>
</feature>
<gene>
    <name type="ordered locus">HPG27_316</name>
</gene>
<proteinExistence type="inferred from homology"/>
<keyword id="KW-0963">Cytoplasm</keyword>
<keyword id="KW-0378">Hydrolase</keyword>
<keyword id="KW-0540">Nuclease</keyword>
<keyword id="KW-1185">Reference proteome</keyword>
<keyword id="KW-0690">Ribosome biogenesis</keyword>
<organism>
    <name type="scientific">Helicobacter pylori (strain G27)</name>
    <dbReference type="NCBI Taxonomy" id="563041"/>
    <lineage>
        <taxon>Bacteria</taxon>
        <taxon>Pseudomonadati</taxon>
        <taxon>Campylobacterota</taxon>
        <taxon>Epsilonproteobacteria</taxon>
        <taxon>Campylobacterales</taxon>
        <taxon>Helicobacteraceae</taxon>
        <taxon>Helicobacter</taxon>
    </lineage>
</organism>
<sequence>MILACDVGLKRIGIAALLNGVILPLEAILRHNRNQASRDLSDLLREKNIQVLVVGKPNESYADTNARIEHFIKLVDFKGEIVFINEDNSSIEAYENLEHLGRKNKRLATKDGRLDSLSACRILERYCQQVLKKD</sequence>
<comment type="function">
    <text evidence="1">Could be a nuclease involved in processing of the 5'-end of pre-16S rRNA.</text>
</comment>
<comment type="subcellular location">
    <subcellularLocation>
        <location evidence="1">Cytoplasm</location>
    </subcellularLocation>
</comment>
<comment type="similarity">
    <text evidence="1">Belongs to the YqgF nuclease family.</text>
</comment>
<protein>
    <recommendedName>
        <fullName evidence="1">Putative pre-16S rRNA nuclease</fullName>
        <ecNumber evidence="1">3.1.-.-</ecNumber>
    </recommendedName>
</protein>